<gene>
    <name evidence="1" type="primary">fusA</name>
    <name type="ordered locus">BL1098</name>
</gene>
<comment type="function">
    <text evidence="1">Catalyzes the GTP-dependent ribosomal translocation step during translation elongation. During this step, the ribosome changes from the pre-translocational (PRE) to the post-translocational (POST) state as the newly formed A-site-bound peptidyl-tRNA and P-site-bound deacylated tRNA move to the P and E sites, respectively. Catalyzes the coordinated movement of the two tRNA molecules, the mRNA and conformational changes in the ribosome.</text>
</comment>
<comment type="subcellular location">
    <subcellularLocation>
        <location evidence="1">Cytoplasm</location>
    </subcellularLocation>
</comment>
<comment type="similarity">
    <text evidence="1">Belongs to the TRAFAC class translation factor GTPase superfamily. Classic translation factor GTPase family. EF-G/EF-2 subfamily.</text>
</comment>
<evidence type="ECO:0000255" key="1">
    <source>
        <dbReference type="HAMAP-Rule" id="MF_00054"/>
    </source>
</evidence>
<reference key="1">
    <citation type="journal article" date="2002" name="Proc. Natl. Acad. Sci. U.S.A.">
        <title>The genome sequence of Bifidobacterium longum reflects its adaptation to the human gastrointestinal tract.</title>
        <authorList>
            <person name="Schell M.A."/>
            <person name="Karmirantzou M."/>
            <person name="Snel B."/>
            <person name="Vilanova D."/>
            <person name="Berger B."/>
            <person name="Pessi G."/>
            <person name="Zwahlen M.-C."/>
            <person name="Desiere F."/>
            <person name="Bork P."/>
            <person name="Delley M."/>
            <person name="Pridmore R.D."/>
            <person name="Arigoni F."/>
        </authorList>
    </citation>
    <scope>NUCLEOTIDE SEQUENCE [LARGE SCALE GENOMIC DNA]</scope>
    <source>
        <strain>NCC 2705</strain>
    </source>
</reference>
<proteinExistence type="inferred from homology"/>
<protein>
    <recommendedName>
        <fullName evidence="1">Elongation factor G</fullName>
        <shortName evidence="1">EF-G</shortName>
    </recommendedName>
</protein>
<dbReference type="EMBL" id="AE014295">
    <property type="protein sequence ID" value="AAN24906.1"/>
    <property type="molecule type" value="Genomic_DNA"/>
</dbReference>
<dbReference type="RefSeq" id="NP_696270.1">
    <property type="nucleotide sequence ID" value="NC_004307.2"/>
</dbReference>
<dbReference type="RefSeq" id="WP_003832662.1">
    <property type="nucleotide sequence ID" value="NC_004307.2"/>
</dbReference>
<dbReference type="SMR" id="Q8G5B6"/>
<dbReference type="STRING" id="206672.BL1098"/>
<dbReference type="EnsemblBacteria" id="AAN24906">
    <property type="protein sequence ID" value="AAN24906"/>
    <property type="gene ID" value="BL1098"/>
</dbReference>
<dbReference type="GeneID" id="69577754"/>
<dbReference type="KEGG" id="blo:BL1098"/>
<dbReference type="PATRIC" id="fig|206672.9.peg.806"/>
<dbReference type="HOGENOM" id="CLU_002794_4_1_11"/>
<dbReference type="OrthoDB" id="9801472at2"/>
<dbReference type="PhylomeDB" id="Q8G5B6"/>
<dbReference type="Proteomes" id="UP000000439">
    <property type="component" value="Chromosome"/>
</dbReference>
<dbReference type="GO" id="GO:0005737">
    <property type="term" value="C:cytoplasm"/>
    <property type="evidence" value="ECO:0007669"/>
    <property type="project" value="UniProtKB-SubCell"/>
</dbReference>
<dbReference type="GO" id="GO:0005525">
    <property type="term" value="F:GTP binding"/>
    <property type="evidence" value="ECO:0007669"/>
    <property type="project" value="UniProtKB-UniRule"/>
</dbReference>
<dbReference type="GO" id="GO:0003924">
    <property type="term" value="F:GTPase activity"/>
    <property type="evidence" value="ECO:0007669"/>
    <property type="project" value="InterPro"/>
</dbReference>
<dbReference type="GO" id="GO:0003746">
    <property type="term" value="F:translation elongation factor activity"/>
    <property type="evidence" value="ECO:0007669"/>
    <property type="project" value="UniProtKB-UniRule"/>
</dbReference>
<dbReference type="GO" id="GO:0032790">
    <property type="term" value="P:ribosome disassembly"/>
    <property type="evidence" value="ECO:0007669"/>
    <property type="project" value="TreeGrafter"/>
</dbReference>
<dbReference type="CDD" id="cd01886">
    <property type="entry name" value="EF-G"/>
    <property type="match status" value="1"/>
</dbReference>
<dbReference type="CDD" id="cd16262">
    <property type="entry name" value="EFG_III"/>
    <property type="match status" value="1"/>
</dbReference>
<dbReference type="CDD" id="cd01434">
    <property type="entry name" value="EFG_mtEFG1_IV"/>
    <property type="match status" value="1"/>
</dbReference>
<dbReference type="CDD" id="cd03713">
    <property type="entry name" value="EFG_mtEFG_C"/>
    <property type="match status" value="1"/>
</dbReference>
<dbReference type="CDD" id="cd04088">
    <property type="entry name" value="EFG_mtEFG_II"/>
    <property type="match status" value="1"/>
</dbReference>
<dbReference type="FunFam" id="2.40.30.10:FF:000006">
    <property type="entry name" value="Elongation factor G"/>
    <property type="match status" value="1"/>
</dbReference>
<dbReference type="FunFam" id="3.30.230.10:FF:000003">
    <property type="entry name" value="Elongation factor G"/>
    <property type="match status" value="1"/>
</dbReference>
<dbReference type="FunFam" id="3.30.70.240:FF:000001">
    <property type="entry name" value="Elongation factor G"/>
    <property type="match status" value="1"/>
</dbReference>
<dbReference type="FunFam" id="3.30.70.870:FF:000001">
    <property type="entry name" value="Elongation factor G"/>
    <property type="match status" value="1"/>
</dbReference>
<dbReference type="FunFam" id="3.40.50.300:FF:000029">
    <property type="entry name" value="Elongation factor G"/>
    <property type="match status" value="1"/>
</dbReference>
<dbReference type="Gene3D" id="3.30.230.10">
    <property type="match status" value="1"/>
</dbReference>
<dbReference type="Gene3D" id="3.30.70.240">
    <property type="match status" value="1"/>
</dbReference>
<dbReference type="Gene3D" id="3.30.70.870">
    <property type="entry name" value="Elongation Factor G (Translational Gtpase), domain 3"/>
    <property type="match status" value="1"/>
</dbReference>
<dbReference type="Gene3D" id="3.40.50.300">
    <property type="entry name" value="P-loop containing nucleotide triphosphate hydrolases"/>
    <property type="match status" value="1"/>
</dbReference>
<dbReference type="Gene3D" id="2.40.30.10">
    <property type="entry name" value="Translation factors"/>
    <property type="match status" value="1"/>
</dbReference>
<dbReference type="HAMAP" id="MF_00054_B">
    <property type="entry name" value="EF_G_EF_2_B"/>
    <property type="match status" value="1"/>
</dbReference>
<dbReference type="InterPro" id="IPR053905">
    <property type="entry name" value="EF-G-like_DII"/>
</dbReference>
<dbReference type="InterPro" id="IPR041095">
    <property type="entry name" value="EFG_II"/>
</dbReference>
<dbReference type="InterPro" id="IPR009022">
    <property type="entry name" value="EFG_III"/>
</dbReference>
<dbReference type="InterPro" id="IPR035647">
    <property type="entry name" value="EFG_III/V"/>
</dbReference>
<dbReference type="InterPro" id="IPR047872">
    <property type="entry name" value="EFG_IV"/>
</dbReference>
<dbReference type="InterPro" id="IPR035649">
    <property type="entry name" value="EFG_V"/>
</dbReference>
<dbReference type="InterPro" id="IPR000640">
    <property type="entry name" value="EFG_V-like"/>
</dbReference>
<dbReference type="InterPro" id="IPR031157">
    <property type="entry name" value="G_TR_CS"/>
</dbReference>
<dbReference type="InterPro" id="IPR027417">
    <property type="entry name" value="P-loop_NTPase"/>
</dbReference>
<dbReference type="InterPro" id="IPR020568">
    <property type="entry name" value="Ribosomal_Su5_D2-typ_SF"/>
</dbReference>
<dbReference type="InterPro" id="IPR014721">
    <property type="entry name" value="Ribsml_uS5_D2-typ_fold_subgr"/>
</dbReference>
<dbReference type="InterPro" id="IPR005225">
    <property type="entry name" value="Small_GTP-bd"/>
</dbReference>
<dbReference type="InterPro" id="IPR000795">
    <property type="entry name" value="T_Tr_GTP-bd_dom"/>
</dbReference>
<dbReference type="InterPro" id="IPR009000">
    <property type="entry name" value="Transl_B-barrel_sf"/>
</dbReference>
<dbReference type="InterPro" id="IPR004540">
    <property type="entry name" value="Transl_elong_EFG/EF2"/>
</dbReference>
<dbReference type="InterPro" id="IPR005517">
    <property type="entry name" value="Transl_elong_EFG/EF2_IV"/>
</dbReference>
<dbReference type="NCBIfam" id="TIGR00484">
    <property type="entry name" value="EF-G"/>
    <property type="match status" value="1"/>
</dbReference>
<dbReference type="NCBIfam" id="NF009381">
    <property type="entry name" value="PRK12740.1-5"/>
    <property type="match status" value="1"/>
</dbReference>
<dbReference type="NCBIfam" id="TIGR00231">
    <property type="entry name" value="small_GTP"/>
    <property type="match status" value="1"/>
</dbReference>
<dbReference type="PANTHER" id="PTHR43261:SF1">
    <property type="entry name" value="RIBOSOME-RELEASING FACTOR 2, MITOCHONDRIAL"/>
    <property type="match status" value="1"/>
</dbReference>
<dbReference type="PANTHER" id="PTHR43261">
    <property type="entry name" value="TRANSLATION ELONGATION FACTOR G-RELATED"/>
    <property type="match status" value="1"/>
</dbReference>
<dbReference type="Pfam" id="PF22042">
    <property type="entry name" value="EF-G_D2"/>
    <property type="match status" value="1"/>
</dbReference>
<dbReference type="Pfam" id="PF00679">
    <property type="entry name" value="EFG_C"/>
    <property type="match status" value="1"/>
</dbReference>
<dbReference type="Pfam" id="PF14492">
    <property type="entry name" value="EFG_III"/>
    <property type="match status" value="1"/>
</dbReference>
<dbReference type="Pfam" id="PF03764">
    <property type="entry name" value="EFG_IV"/>
    <property type="match status" value="1"/>
</dbReference>
<dbReference type="Pfam" id="PF00009">
    <property type="entry name" value="GTP_EFTU"/>
    <property type="match status" value="1"/>
</dbReference>
<dbReference type="PRINTS" id="PR00315">
    <property type="entry name" value="ELONGATNFCT"/>
</dbReference>
<dbReference type="SMART" id="SM00838">
    <property type="entry name" value="EFG_C"/>
    <property type="match status" value="1"/>
</dbReference>
<dbReference type="SMART" id="SM00889">
    <property type="entry name" value="EFG_IV"/>
    <property type="match status" value="1"/>
</dbReference>
<dbReference type="SUPFAM" id="SSF54980">
    <property type="entry name" value="EF-G C-terminal domain-like"/>
    <property type="match status" value="2"/>
</dbReference>
<dbReference type="SUPFAM" id="SSF52540">
    <property type="entry name" value="P-loop containing nucleoside triphosphate hydrolases"/>
    <property type="match status" value="1"/>
</dbReference>
<dbReference type="SUPFAM" id="SSF54211">
    <property type="entry name" value="Ribosomal protein S5 domain 2-like"/>
    <property type="match status" value="1"/>
</dbReference>
<dbReference type="SUPFAM" id="SSF50447">
    <property type="entry name" value="Translation proteins"/>
    <property type="match status" value="1"/>
</dbReference>
<dbReference type="PROSITE" id="PS00301">
    <property type="entry name" value="G_TR_1"/>
    <property type="match status" value="1"/>
</dbReference>
<dbReference type="PROSITE" id="PS51722">
    <property type="entry name" value="G_TR_2"/>
    <property type="match status" value="1"/>
</dbReference>
<feature type="chain" id="PRO_0000091077" description="Elongation factor G">
    <location>
        <begin position="1"/>
        <end position="707"/>
    </location>
</feature>
<feature type="domain" description="tr-type G">
    <location>
        <begin position="9"/>
        <end position="293"/>
    </location>
</feature>
<feature type="binding site" evidence="1">
    <location>
        <begin position="18"/>
        <end position="25"/>
    </location>
    <ligand>
        <name>GTP</name>
        <dbReference type="ChEBI" id="CHEBI:37565"/>
    </ligand>
</feature>
<feature type="binding site" evidence="1">
    <location>
        <begin position="90"/>
        <end position="94"/>
    </location>
    <ligand>
        <name>GTP</name>
        <dbReference type="ChEBI" id="CHEBI:37565"/>
    </ligand>
</feature>
<feature type="binding site" evidence="1">
    <location>
        <begin position="144"/>
        <end position="147"/>
    </location>
    <ligand>
        <name>GTP</name>
        <dbReference type="ChEBI" id="CHEBI:37565"/>
    </ligand>
</feature>
<accession>Q8G5B6</accession>
<keyword id="KW-0963">Cytoplasm</keyword>
<keyword id="KW-0251">Elongation factor</keyword>
<keyword id="KW-0342">GTP-binding</keyword>
<keyword id="KW-0547">Nucleotide-binding</keyword>
<keyword id="KW-0648">Protein biosynthesis</keyword>
<keyword id="KW-1185">Reference proteome</keyword>
<sequence>MAEEISDLHDVRNIGIMAHIDAGKTTTTERILFYTGKNYKIGETHDGASTMDFMAQEQERGITIQSAATTCFWSRQSHDTKDKFQINIIDTPGHVDFTAEVERSLRVLDGAVAVFDGKEGVEPQSETVWRQADKYGVPRICFINKMDKLGANFYYSVDTIKEKLGATPIVMQLPIGSENDFTGVVDLVEMQAYVWNGTEELGAKYDTTEIPDDLKDKAQEYHEKLVEAAAEADDDLMNKFFEDGDLSKEDIRAGVRKLTIAKEAFPIFCGSAFKDKGVQPMLDGVVDYLPSPEDVPAIKGYKPGDESVEIDRHPVKSDPFAALVFKISTHPFYGKLVFVRVYSGSVVPGDSVLDSTREKKERIGKIFQMHADKENPMDRADAGNIYTFVGLKNVTTGDTLCAIDDPITLDSMTFPDPVIQVAVEPKTKADQEKMGIALSKLAEEDPTFQVTTDEESGQTLIAGMGELQLDIIVDRMRREFKVECNQGKPQVAYRETIRKAVMDQGYTHKKQTGGSGQFAKVLMNFEPLDTTEGKTFEFENKVTGGHISAEFIGPIEAGVKEAMESGVLAGFPVVGVKATVTDGQMHPVDSSEMAFKLAGSMCFKEAAPKAKPVILEPIMKVEVRTPEEYMGEVIGDLNQRRGNIQSMTDGVGVKVIDAKVPLSEMFGYIGDLRSKTQGRAMFTMEMDSYDEVPKSVSEEIIKAQRGE</sequence>
<organism>
    <name type="scientific">Bifidobacterium longum (strain NCC 2705)</name>
    <dbReference type="NCBI Taxonomy" id="206672"/>
    <lineage>
        <taxon>Bacteria</taxon>
        <taxon>Bacillati</taxon>
        <taxon>Actinomycetota</taxon>
        <taxon>Actinomycetes</taxon>
        <taxon>Bifidobacteriales</taxon>
        <taxon>Bifidobacteriaceae</taxon>
        <taxon>Bifidobacterium</taxon>
    </lineage>
</organism>
<name>EFG_BIFLO</name>